<accession>Q8IYX3</accession>
<accession>B7Z7H5</accession>
<accession>Q8N9Y9</accession>
<proteinExistence type="evidence at protein level"/>
<dbReference type="EMBL" id="AK093365">
    <property type="protein sequence ID" value="BAC04145.1"/>
    <property type="molecule type" value="mRNA"/>
</dbReference>
<dbReference type="EMBL" id="AK302030">
    <property type="protein sequence ID" value="BAH13611.1"/>
    <property type="molecule type" value="mRNA"/>
</dbReference>
<dbReference type="EMBL" id="AP000553">
    <property type="status" value="NOT_ANNOTATED_CDS"/>
    <property type="molecule type" value="Genomic_DNA"/>
</dbReference>
<dbReference type="EMBL" id="CH471095">
    <property type="protein sequence ID" value="EAW59466.1"/>
    <property type="molecule type" value="Genomic_DNA"/>
</dbReference>
<dbReference type="EMBL" id="BC033499">
    <property type="protein sequence ID" value="AAH33499.1"/>
    <property type="molecule type" value="mRNA"/>
</dbReference>
<dbReference type="CCDS" id="CCDS13791.1">
    <molecule id="Q8IYX3-2"/>
</dbReference>
<dbReference type="CCDS" id="CCDS87008.1">
    <molecule id="Q8IYX3-3"/>
</dbReference>
<dbReference type="RefSeq" id="NP_001317995.1">
    <molecule id="Q8IYX3-3"/>
    <property type="nucleotide sequence ID" value="NM_001331066.2"/>
</dbReference>
<dbReference type="RefSeq" id="NP_689825.2">
    <molecule id="Q8IYX3-2"/>
    <property type="nucleotide sequence ID" value="NM_152612.2"/>
</dbReference>
<dbReference type="BioGRID" id="127896">
    <property type="interactions" value="43"/>
</dbReference>
<dbReference type="FunCoup" id="Q8IYX3">
    <property type="interactions" value="75"/>
</dbReference>
<dbReference type="IntAct" id="Q8IYX3">
    <property type="interactions" value="33"/>
</dbReference>
<dbReference type="MINT" id="Q8IYX3"/>
<dbReference type="STRING" id="9606.ENSP00000292779"/>
<dbReference type="GlyCosmos" id="Q8IYX3">
    <property type="glycosylation" value="1 site, 1 glycan"/>
</dbReference>
<dbReference type="GlyGen" id="Q8IYX3">
    <property type="glycosylation" value="4 sites, 1 O-linked glycan (4 sites)"/>
</dbReference>
<dbReference type="iPTMnet" id="Q8IYX3"/>
<dbReference type="PhosphoSitePlus" id="Q8IYX3"/>
<dbReference type="BioMuta" id="CCDC116"/>
<dbReference type="DMDM" id="117949387"/>
<dbReference type="MassIVE" id="Q8IYX3"/>
<dbReference type="PaxDb" id="9606-ENSP00000292779"/>
<dbReference type="PeptideAtlas" id="Q8IYX3"/>
<dbReference type="ProteomicsDB" id="71256">
    <molecule id="Q8IYX3-1"/>
</dbReference>
<dbReference type="ProteomicsDB" id="71257">
    <molecule id="Q8IYX3-2"/>
</dbReference>
<dbReference type="Antibodypedia" id="218">
    <property type="antibodies" value="65 antibodies from 12 providers"/>
</dbReference>
<dbReference type="DNASU" id="164592"/>
<dbReference type="Ensembl" id="ENST00000292779.4">
    <molecule id="Q8IYX3-2"/>
    <property type="protein sequence ID" value="ENSP00000292779.3"/>
    <property type="gene ID" value="ENSG00000161180.11"/>
</dbReference>
<dbReference type="Ensembl" id="ENST00000607942.5">
    <molecule id="Q8IYX3-3"/>
    <property type="protein sequence ID" value="ENSP00000476296.1"/>
    <property type="gene ID" value="ENSG00000161180.11"/>
</dbReference>
<dbReference type="GeneID" id="164592"/>
<dbReference type="KEGG" id="hsa:164592"/>
<dbReference type="MANE-Select" id="ENST00000292779.4">
    <property type="protein sequence ID" value="ENSP00000292779.3"/>
    <property type="RefSeq nucleotide sequence ID" value="NM_152612.3"/>
    <property type="RefSeq protein sequence ID" value="NP_689825.2"/>
</dbReference>
<dbReference type="UCSC" id="uc002zve.4">
    <molecule id="Q8IYX3-2"/>
    <property type="organism name" value="human"/>
</dbReference>
<dbReference type="AGR" id="HGNC:26688"/>
<dbReference type="CTD" id="164592"/>
<dbReference type="DisGeNET" id="164592"/>
<dbReference type="GeneCards" id="CCDC116"/>
<dbReference type="HGNC" id="HGNC:26688">
    <property type="gene designation" value="CCDC116"/>
</dbReference>
<dbReference type="HPA" id="ENSG00000161180">
    <property type="expression patterns" value="Tissue enriched (testis)"/>
</dbReference>
<dbReference type="neXtProt" id="NX_Q8IYX3"/>
<dbReference type="OpenTargets" id="ENSG00000161180"/>
<dbReference type="PharmGKB" id="PA145149301"/>
<dbReference type="VEuPathDB" id="HostDB:ENSG00000161180"/>
<dbReference type="eggNOG" id="ENOG502STQK">
    <property type="taxonomic scope" value="Eukaryota"/>
</dbReference>
<dbReference type="GeneTree" id="ENSGT00390000002259"/>
<dbReference type="HOGENOM" id="CLU_022190_1_0_1"/>
<dbReference type="InParanoid" id="Q8IYX3"/>
<dbReference type="OMA" id="PCHSLYT"/>
<dbReference type="OrthoDB" id="9837963at2759"/>
<dbReference type="PAN-GO" id="Q8IYX3">
    <property type="GO annotations" value="1 GO annotation based on evolutionary models"/>
</dbReference>
<dbReference type="PhylomeDB" id="Q8IYX3"/>
<dbReference type="TreeFam" id="TF337163"/>
<dbReference type="PathwayCommons" id="Q8IYX3"/>
<dbReference type="SignaLink" id="Q8IYX3"/>
<dbReference type="BioGRID-ORCS" id="164592">
    <property type="hits" value="37 hits in 1153 CRISPR screens"/>
</dbReference>
<dbReference type="GenomeRNAi" id="164592"/>
<dbReference type="Pharos" id="Q8IYX3">
    <property type="development level" value="Tdark"/>
</dbReference>
<dbReference type="PRO" id="PR:Q8IYX3"/>
<dbReference type="Proteomes" id="UP000005640">
    <property type="component" value="Chromosome 22"/>
</dbReference>
<dbReference type="RNAct" id="Q8IYX3">
    <property type="molecule type" value="protein"/>
</dbReference>
<dbReference type="Bgee" id="ENSG00000161180">
    <property type="expression patterns" value="Expressed in left testis and 86 other cell types or tissues"/>
</dbReference>
<dbReference type="ExpressionAtlas" id="Q8IYX3">
    <property type="expression patterns" value="baseline and differential"/>
</dbReference>
<dbReference type="GO" id="GO:0005813">
    <property type="term" value="C:centrosome"/>
    <property type="evidence" value="ECO:0000314"/>
    <property type="project" value="UniProtKB"/>
</dbReference>
<dbReference type="GO" id="GO:0005737">
    <property type="term" value="C:cytoplasm"/>
    <property type="evidence" value="ECO:0007669"/>
    <property type="project" value="UniProtKB-KW"/>
</dbReference>
<dbReference type="InterPro" id="IPR031532">
    <property type="entry name" value="DUF4702"/>
</dbReference>
<dbReference type="PANTHER" id="PTHR36861">
    <property type="entry name" value="COILED-COIL DOMAIN-CONTAINING PROTEIN 116"/>
    <property type="match status" value="1"/>
</dbReference>
<dbReference type="PANTHER" id="PTHR36861:SF1">
    <property type="entry name" value="COILED-COIL DOMAIN-CONTAINING PROTEIN 116"/>
    <property type="match status" value="1"/>
</dbReference>
<dbReference type="Pfam" id="PF15774">
    <property type="entry name" value="DUF4702"/>
    <property type="match status" value="1"/>
</dbReference>
<comment type="interaction">
    <interactant intactId="EBI-744311">
        <id>Q8IYX3</id>
    </interactant>
    <interactant intactId="EBI-11745576">
        <id>Q6PJH3</id>
        <label>AKAP9</label>
    </interactant>
    <organismsDiffer>false</organismsDiffer>
    <experiments>3</experiments>
</comment>
<comment type="interaction">
    <interactant intactId="EBI-744311">
        <id>Q8IYX3</id>
    </interactant>
    <interactant intactId="EBI-741753">
        <id>Q00994</id>
        <label>BEX3</label>
    </interactant>
    <organismsDiffer>false</organismsDiffer>
    <experiments>4</experiments>
</comment>
<comment type="interaction">
    <interactant intactId="EBI-744311">
        <id>Q8IYX3</id>
    </interactant>
    <interactant intactId="EBI-3866279">
        <id>Q9BWT7</id>
        <label>CARD10</label>
    </interactant>
    <organismsDiffer>false</organismsDiffer>
    <experiments>3</experiments>
</comment>
<comment type="interaction">
    <interactant intactId="EBI-744311">
        <id>Q8IYX3</id>
    </interactant>
    <interactant intactId="EBI-5278764">
        <id>Q96GN5</id>
        <label>CDCA7L</label>
    </interactant>
    <organismsDiffer>false</organismsDiffer>
    <experiments>3</experiments>
</comment>
<comment type="interaction">
    <interactant intactId="EBI-744311">
        <id>Q8IYX3</id>
    </interactant>
    <interactant intactId="EBI-2872654">
        <id>Q96NB1</id>
        <label>CEP20</label>
    </interactant>
    <organismsDiffer>false</organismsDiffer>
    <experiments>3</experiments>
</comment>
<comment type="interaction">
    <interactant intactId="EBI-744311">
        <id>Q8IYX3</id>
    </interactant>
    <interactant intactId="EBI-3866319">
        <id>Q9Y2V7</id>
        <label>COG6</label>
    </interactant>
    <organismsDiffer>false</organismsDiffer>
    <experiments>3</experiments>
</comment>
<comment type="interaction">
    <interactant intactId="EBI-744311">
        <id>Q8IYX3</id>
    </interactant>
    <interactant intactId="EBI-347804">
        <id>P68400</id>
        <label>CSNK2A1</label>
    </interactant>
    <organismsDiffer>false</organismsDiffer>
    <experiments>3</experiments>
</comment>
<comment type="interaction">
    <interactant intactId="EBI-744311">
        <id>Q8IYX3</id>
    </interactant>
    <interactant intactId="EBI-1188472">
        <id>P78358</id>
        <label>CTAG1B</label>
    </interactant>
    <organismsDiffer>false</organismsDiffer>
    <experiments>3</experiments>
</comment>
<comment type="interaction">
    <interactant intactId="EBI-744311">
        <id>Q8IYX3</id>
    </interactant>
    <interactant intactId="EBI-10175124">
        <id>Q8IZU0</id>
        <label>FAM9B</label>
    </interactant>
    <organismsDiffer>false</organismsDiffer>
    <experiments>3</experiments>
</comment>
<comment type="interaction">
    <interactant intactId="EBI-744311">
        <id>Q8IYX3</id>
    </interactant>
    <interactant intactId="EBI-5916454">
        <id>A6NEM1</id>
        <label>GOLGA6L9</label>
    </interactant>
    <organismsDiffer>false</organismsDiffer>
    <experiments>3</experiments>
</comment>
<comment type="interaction">
    <interactant intactId="EBI-744311">
        <id>Q8IYX3</id>
    </interactant>
    <interactant intactId="EBI-7116203">
        <id>O75031</id>
        <label>HSF2BP</label>
    </interactant>
    <organismsDiffer>false</organismsDiffer>
    <experiments>3</experiments>
</comment>
<comment type="interaction">
    <interactant intactId="EBI-744311">
        <id>Q8IYX3</id>
    </interactant>
    <interactant intactId="EBI-947015">
        <id>P24592</id>
        <label>IGFBP6</label>
    </interactant>
    <organismsDiffer>false</organismsDiffer>
    <experiments>3</experiments>
</comment>
<comment type="interaction">
    <interactant intactId="EBI-744311">
        <id>Q8IYX3</id>
    </interactant>
    <interactant intactId="EBI-948001">
        <id>Q15323</id>
        <label>KRT31</label>
    </interactant>
    <organismsDiffer>false</organismsDiffer>
    <experiments>3</experiments>
</comment>
<comment type="interaction">
    <interactant intactId="EBI-744311">
        <id>Q8IYX3</id>
    </interactant>
    <interactant intactId="EBI-10171697">
        <id>Q6A162</id>
        <label>KRT40</label>
    </interactant>
    <organismsDiffer>false</organismsDiffer>
    <experiments>3</experiments>
</comment>
<comment type="interaction">
    <interactant intactId="EBI-744311">
        <id>Q8IYX3</id>
    </interactant>
    <interactant intactId="EBI-724076">
        <id>Q99750</id>
        <label>MDFI</label>
    </interactant>
    <organismsDiffer>false</organismsDiffer>
    <experiments>7</experiments>
</comment>
<comment type="interaction">
    <interactant intactId="EBI-744311">
        <id>Q8IYX3</id>
    </interactant>
    <interactant intactId="EBI-18582591">
        <id>Q99687-3</id>
        <label>MEIS3</label>
    </interactant>
    <organismsDiffer>false</organismsDiffer>
    <experiments>3</experiments>
</comment>
<comment type="interaction">
    <interactant intactId="EBI-744311">
        <id>Q8IYX3</id>
    </interactant>
    <interactant intactId="EBI-742948">
        <id>Q5JR59</id>
        <label>MTUS2</label>
    </interactant>
    <organismsDiffer>false</organismsDiffer>
    <experiments>4</experiments>
</comment>
<comment type="interaction">
    <interactant intactId="EBI-744311">
        <id>Q8IYX3</id>
    </interactant>
    <interactant intactId="EBI-11522433">
        <id>Q5JR59-3</id>
        <label>MTUS2</label>
    </interactant>
    <organismsDiffer>false</organismsDiffer>
    <experiments>3</experiments>
</comment>
<comment type="interaction">
    <interactant intactId="EBI-744311">
        <id>Q8IYX3</id>
    </interactant>
    <interactant intactId="EBI-2692890">
        <id>Q96KN3</id>
        <label>PKNOX2</label>
    </interactant>
    <organismsDiffer>false</organismsDiffer>
    <experiments>3</experiments>
</comment>
<comment type="interaction">
    <interactant intactId="EBI-744311">
        <id>Q8IYX3</id>
    </interactant>
    <interactant intactId="EBI-710402">
        <id>Q96I34</id>
        <label>PPP1R16A</label>
    </interactant>
    <organismsDiffer>false</organismsDiffer>
    <experiments>3</experiments>
</comment>
<comment type="interaction">
    <interactant intactId="EBI-744311">
        <id>Q8IYX3</id>
    </interactant>
    <interactant intactId="EBI-6912267">
        <id>A6NK89</id>
        <label>RASSF10</label>
    </interactant>
    <organismsDiffer>false</organismsDiffer>
    <experiments>3</experiments>
</comment>
<comment type="interaction">
    <interactant intactId="EBI-744311">
        <id>Q8IYX3</id>
    </interactant>
    <interactant intactId="EBI-742268">
        <id>O75478</id>
        <label>TADA2A</label>
    </interactant>
    <organismsDiffer>false</organismsDiffer>
    <experiments>5</experiments>
</comment>
<comment type="interaction">
    <interactant intactId="EBI-744311">
        <id>Q8IYX3</id>
    </interactant>
    <interactant intactId="EBI-1105213">
        <id>Q9UBB9</id>
        <label>TFIP11</label>
    </interactant>
    <organismsDiffer>false</organismsDiffer>
    <experiments>3</experiments>
</comment>
<comment type="interaction">
    <interactant intactId="EBI-744311">
        <id>Q8IYX3</id>
    </interactant>
    <interactant intactId="EBI-359224">
        <id>Q13077</id>
        <label>TRAF1</label>
    </interactant>
    <organismsDiffer>false</organismsDiffer>
    <experiments>6</experiments>
</comment>
<comment type="interaction">
    <interactant intactId="EBI-744311">
        <id>Q8IYX3</id>
    </interactant>
    <interactant intactId="EBI-739895">
        <id>Q8N6Y0</id>
        <label>USHBP1</label>
    </interactant>
    <organismsDiffer>false</organismsDiffer>
    <experiments>6</experiments>
</comment>
<comment type="interaction">
    <interactant intactId="EBI-744311">
        <id>Q8IYX3</id>
    </interactant>
    <interactant intactId="EBI-12030590">
        <id>Q9H0C1</id>
        <label>ZMYND12</label>
    </interactant>
    <organismsDiffer>false</organismsDiffer>
    <experiments>3</experiments>
</comment>
<comment type="interaction">
    <interactant intactId="EBI-744311">
        <id>Q8IYX3</id>
    </interactant>
    <interactant intactId="EBI-625509">
        <id>Q8N720</id>
        <label>ZNF655</label>
    </interactant>
    <organismsDiffer>false</organismsDiffer>
    <experiments>3</experiments>
</comment>
<comment type="subcellular location">
    <subcellularLocation>
        <location evidence="4">Cytoplasm</location>
        <location evidence="4">Cytoskeleton</location>
        <location evidence="4">Microtubule organizing center</location>
        <location evidence="4">Centrosome</location>
    </subcellularLocation>
</comment>
<comment type="alternative products">
    <event type="alternative splicing"/>
    <isoform>
        <id>Q8IYX3-2</id>
        <name>2</name>
        <sequence type="displayed"/>
    </isoform>
    <isoform>
        <id>Q8IYX3-1</id>
        <name>1</name>
        <sequence type="described" ref="VSP_059646"/>
    </isoform>
    <isoform>
        <id>Q8IYX3-3</id>
        <name>3</name>
        <sequence type="described" ref="VSP_059645"/>
    </isoform>
</comment>
<evidence type="ECO:0000250" key="1">
    <source>
        <dbReference type="UniProtKB" id="Q4V8B5"/>
    </source>
</evidence>
<evidence type="ECO:0000255" key="2"/>
<evidence type="ECO:0000256" key="3">
    <source>
        <dbReference type="SAM" id="MobiDB-lite"/>
    </source>
</evidence>
<evidence type="ECO:0000269" key="4">
    <source>
    </source>
</evidence>
<gene>
    <name type="primary">CCDC116</name>
</gene>
<organism>
    <name type="scientific">Homo sapiens</name>
    <name type="common">Human</name>
    <dbReference type="NCBI Taxonomy" id="9606"/>
    <lineage>
        <taxon>Eukaryota</taxon>
        <taxon>Metazoa</taxon>
        <taxon>Chordata</taxon>
        <taxon>Craniata</taxon>
        <taxon>Vertebrata</taxon>
        <taxon>Euteleostomi</taxon>
        <taxon>Mammalia</taxon>
        <taxon>Eutheria</taxon>
        <taxon>Euarchontoglires</taxon>
        <taxon>Primates</taxon>
        <taxon>Haplorrhini</taxon>
        <taxon>Catarrhini</taxon>
        <taxon>Hominidae</taxon>
        <taxon>Homo</taxon>
    </lineage>
</organism>
<keyword id="KW-0025">Alternative splicing</keyword>
<keyword id="KW-0175">Coiled coil</keyword>
<keyword id="KW-0963">Cytoplasm</keyword>
<keyword id="KW-0206">Cytoskeleton</keyword>
<keyword id="KW-0597">Phosphoprotein</keyword>
<keyword id="KW-1267">Proteomics identification</keyword>
<keyword id="KW-1185">Reference proteome</keyword>
<reference key="1">
    <citation type="journal article" date="2004" name="Nat. Genet.">
        <title>Complete sequencing and characterization of 21,243 full-length human cDNAs.</title>
        <authorList>
            <person name="Ota T."/>
            <person name="Suzuki Y."/>
            <person name="Nishikawa T."/>
            <person name="Otsuki T."/>
            <person name="Sugiyama T."/>
            <person name="Irie R."/>
            <person name="Wakamatsu A."/>
            <person name="Hayashi K."/>
            <person name="Sato H."/>
            <person name="Nagai K."/>
            <person name="Kimura K."/>
            <person name="Makita H."/>
            <person name="Sekine M."/>
            <person name="Obayashi M."/>
            <person name="Nishi T."/>
            <person name="Shibahara T."/>
            <person name="Tanaka T."/>
            <person name="Ishii S."/>
            <person name="Yamamoto J."/>
            <person name="Saito K."/>
            <person name="Kawai Y."/>
            <person name="Isono Y."/>
            <person name="Nakamura Y."/>
            <person name="Nagahari K."/>
            <person name="Murakami K."/>
            <person name="Yasuda T."/>
            <person name="Iwayanagi T."/>
            <person name="Wagatsuma M."/>
            <person name="Shiratori A."/>
            <person name="Sudo H."/>
            <person name="Hosoiri T."/>
            <person name="Kaku Y."/>
            <person name="Kodaira H."/>
            <person name="Kondo H."/>
            <person name="Sugawara M."/>
            <person name="Takahashi M."/>
            <person name="Kanda K."/>
            <person name="Yokoi T."/>
            <person name="Furuya T."/>
            <person name="Kikkawa E."/>
            <person name="Omura Y."/>
            <person name="Abe K."/>
            <person name="Kamihara K."/>
            <person name="Katsuta N."/>
            <person name="Sato K."/>
            <person name="Tanikawa M."/>
            <person name="Yamazaki M."/>
            <person name="Ninomiya K."/>
            <person name="Ishibashi T."/>
            <person name="Yamashita H."/>
            <person name="Murakawa K."/>
            <person name="Fujimori K."/>
            <person name="Tanai H."/>
            <person name="Kimata M."/>
            <person name="Watanabe M."/>
            <person name="Hiraoka S."/>
            <person name="Chiba Y."/>
            <person name="Ishida S."/>
            <person name="Ono Y."/>
            <person name="Takiguchi S."/>
            <person name="Watanabe S."/>
            <person name="Yosida M."/>
            <person name="Hotuta T."/>
            <person name="Kusano J."/>
            <person name="Kanehori K."/>
            <person name="Takahashi-Fujii A."/>
            <person name="Hara H."/>
            <person name="Tanase T.-O."/>
            <person name="Nomura Y."/>
            <person name="Togiya S."/>
            <person name="Komai F."/>
            <person name="Hara R."/>
            <person name="Takeuchi K."/>
            <person name="Arita M."/>
            <person name="Imose N."/>
            <person name="Musashino K."/>
            <person name="Yuuki H."/>
            <person name="Oshima A."/>
            <person name="Sasaki N."/>
            <person name="Aotsuka S."/>
            <person name="Yoshikawa Y."/>
            <person name="Matsunawa H."/>
            <person name="Ichihara T."/>
            <person name="Shiohata N."/>
            <person name="Sano S."/>
            <person name="Moriya S."/>
            <person name="Momiyama H."/>
            <person name="Satoh N."/>
            <person name="Takami S."/>
            <person name="Terashima Y."/>
            <person name="Suzuki O."/>
            <person name="Nakagawa S."/>
            <person name="Senoh A."/>
            <person name="Mizoguchi H."/>
            <person name="Goto Y."/>
            <person name="Shimizu F."/>
            <person name="Wakebe H."/>
            <person name="Hishigaki H."/>
            <person name="Watanabe T."/>
            <person name="Sugiyama A."/>
            <person name="Takemoto M."/>
            <person name="Kawakami B."/>
            <person name="Yamazaki M."/>
            <person name="Watanabe K."/>
            <person name="Kumagai A."/>
            <person name="Itakura S."/>
            <person name="Fukuzumi Y."/>
            <person name="Fujimori Y."/>
            <person name="Komiyama M."/>
            <person name="Tashiro H."/>
            <person name="Tanigami A."/>
            <person name="Fujiwara T."/>
            <person name="Ono T."/>
            <person name="Yamada K."/>
            <person name="Fujii Y."/>
            <person name="Ozaki K."/>
            <person name="Hirao M."/>
            <person name="Ohmori Y."/>
            <person name="Kawabata A."/>
            <person name="Hikiji T."/>
            <person name="Kobatake N."/>
            <person name="Inagaki H."/>
            <person name="Ikema Y."/>
            <person name="Okamoto S."/>
            <person name="Okitani R."/>
            <person name="Kawakami T."/>
            <person name="Noguchi S."/>
            <person name="Itoh T."/>
            <person name="Shigeta K."/>
            <person name="Senba T."/>
            <person name="Matsumura K."/>
            <person name="Nakajima Y."/>
            <person name="Mizuno T."/>
            <person name="Morinaga M."/>
            <person name="Sasaki M."/>
            <person name="Togashi T."/>
            <person name="Oyama M."/>
            <person name="Hata H."/>
            <person name="Watanabe M."/>
            <person name="Komatsu T."/>
            <person name="Mizushima-Sugano J."/>
            <person name="Satoh T."/>
            <person name="Shirai Y."/>
            <person name="Takahashi Y."/>
            <person name="Nakagawa K."/>
            <person name="Okumura K."/>
            <person name="Nagase T."/>
            <person name="Nomura N."/>
            <person name="Kikuchi H."/>
            <person name="Masuho Y."/>
            <person name="Yamashita R."/>
            <person name="Nakai K."/>
            <person name="Yada T."/>
            <person name="Nakamura Y."/>
            <person name="Ohara O."/>
            <person name="Isogai T."/>
            <person name="Sugano S."/>
        </authorList>
    </citation>
    <scope>NUCLEOTIDE SEQUENCE [LARGE SCALE MRNA] (ISOFORMS 1 AND 3)</scope>
    <source>
        <tissue>Testis</tissue>
    </source>
</reference>
<reference key="2">
    <citation type="journal article" date="1999" name="Nature">
        <title>The DNA sequence of human chromosome 22.</title>
        <authorList>
            <person name="Dunham I."/>
            <person name="Hunt A.R."/>
            <person name="Collins J.E."/>
            <person name="Bruskiewich R."/>
            <person name="Beare D.M."/>
            <person name="Clamp M."/>
            <person name="Smink L.J."/>
            <person name="Ainscough R."/>
            <person name="Almeida J.P."/>
            <person name="Babbage A.K."/>
            <person name="Bagguley C."/>
            <person name="Bailey J."/>
            <person name="Barlow K.F."/>
            <person name="Bates K.N."/>
            <person name="Beasley O.P."/>
            <person name="Bird C.P."/>
            <person name="Blakey S.E."/>
            <person name="Bridgeman A.M."/>
            <person name="Buck D."/>
            <person name="Burgess J."/>
            <person name="Burrill W.D."/>
            <person name="Burton J."/>
            <person name="Carder C."/>
            <person name="Carter N.P."/>
            <person name="Chen Y."/>
            <person name="Clark G."/>
            <person name="Clegg S.M."/>
            <person name="Cobley V.E."/>
            <person name="Cole C.G."/>
            <person name="Collier R.E."/>
            <person name="Connor R."/>
            <person name="Conroy D."/>
            <person name="Corby N.R."/>
            <person name="Coville G.J."/>
            <person name="Cox A.V."/>
            <person name="Davis J."/>
            <person name="Dawson E."/>
            <person name="Dhami P.D."/>
            <person name="Dockree C."/>
            <person name="Dodsworth S.J."/>
            <person name="Durbin R.M."/>
            <person name="Ellington A.G."/>
            <person name="Evans K.L."/>
            <person name="Fey J.M."/>
            <person name="Fleming K."/>
            <person name="French L."/>
            <person name="Garner A.A."/>
            <person name="Gilbert J.G.R."/>
            <person name="Goward M.E."/>
            <person name="Grafham D.V."/>
            <person name="Griffiths M.N.D."/>
            <person name="Hall C."/>
            <person name="Hall R.E."/>
            <person name="Hall-Tamlyn G."/>
            <person name="Heathcott R.W."/>
            <person name="Ho S."/>
            <person name="Holmes S."/>
            <person name="Hunt S.E."/>
            <person name="Jones M.C."/>
            <person name="Kershaw J."/>
            <person name="Kimberley A.M."/>
            <person name="King A."/>
            <person name="Laird G.K."/>
            <person name="Langford C.F."/>
            <person name="Leversha M.A."/>
            <person name="Lloyd C."/>
            <person name="Lloyd D.M."/>
            <person name="Martyn I.D."/>
            <person name="Mashreghi-Mohammadi M."/>
            <person name="Matthews L.H."/>
            <person name="Mccann O.T."/>
            <person name="Mcclay J."/>
            <person name="Mclaren S."/>
            <person name="McMurray A.A."/>
            <person name="Milne S.A."/>
            <person name="Mortimore B.J."/>
            <person name="Odell C.N."/>
            <person name="Pavitt R."/>
            <person name="Pearce A.V."/>
            <person name="Pearson D."/>
            <person name="Phillimore B.J.C.T."/>
            <person name="Phillips S.H."/>
            <person name="Plumb R.W."/>
            <person name="Ramsay H."/>
            <person name="Ramsey Y."/>
            <person name="Rogers L."/>
            <person name="Ross M.T."/>
            <person name="Scott C.E."/>
            <person name="Sehra H.K."/>
            <person name="Skuce C.D."/>
            <person name="Smalley S."/>
            <person name="Smith M.L."/>
            <person name="Soderlund C."/>
            <person name="Spragon L."/>
            <person name="Steward C.A."/>
            <person name="Sulston J.E."/>
            <person name="Swann R.M."/>
            <person name="Vaudin M."/>
            <person name="Wall M."/>
            <person name="Wallis J.M."/>
            <person name="Whiteley M.N."/>
            <person name="Willey D.L."/>
            <person name="Williams L."/>
            <person name="Williams S.A."/>
            <person name="Williamson H."/>
            <person name="Wilmer T.E."/>
            <person name="Wilming L."/>
            <person name="Wright C.L."/>
            <person name="Hubbard T."/>
            <person name="Bentley D.R."/>
            <person name="Beck S."/>
            <person name="Rogers J."/>
            <person name="Shimizu N."/>
            <person name="Minoshima S."/>
            <person name="Kawasaki K."/>
            <person name="Sasaki T."/>
            <person name="Asakawa S."/>
            <person name="Kudoh J."/>
            <person name="Shintani A."/>
            <person name="Shibuya K."/>
            <person name="Yoshizaki Y."/>
            <person name="Aoki N."/>
            <person name="Mitsuyama S."/>
            <person name="Roe B.A."/>
            <person name="Chen F."/>
            <person name="Chu L."/>
            <person name="Crabtree J."/>
            <person name="Deschamps S."/>
            <person name="Do A."/>
            <person name="Do T."/>
            <person name="Dorman A."/>
            <person name="Fang F."/>
            <person name="Fu Y."/>
            <person name="Hu P."/>
            <person name="Hua A."/>
            <person name="Kenton S."/>
            <person name="Lai H."/>
            <person name="Lao H.I."/>
            <person name="Lewis J."/>
            <person name="Lewis S."/>
            <person name="Lin S.-P."/>
            <person name="Loh P."/>
            <person name="Malaj E."/>
            <person name="Nguyen T."/>
            <person name="Pan H."/>
            <person name="Phan S."/>
            <person name="Qi S."/>
            <person name="Qian Y."/>
            <person name="Ray L."/>
            <person name="Ren Q."/>
            <person name="Shaull S."/>
            <person name="Sloan D."/>
            <person name="Song L."/>
            <person name="Wang Q."/>
            <person name="Wang Y."/>
            <person name="Wang Z."/>
            <person name="White J."/>
            <person name="Willingham D."/>
            <person name="Wu H."/>
            <person name="Yao Z."/>
            <person name="Zhan M."/>
            <person name="Zhang G."/>
            <person name="Chissoe S."/>
            <person name="Murray J."/>
            <person name="Miller N."/>
            <person name="Minx P."/>
            <person name="Fulton R."/>
            <person name="Johnson D."/>
            <person name="Bemis G."/>
            <person name="Bentley D."/>
            <person name="Bradshaw H."/>
            <person name="Bourne S."/>
            <person name="Cordes M."/>
            <person name="Du Z."/>
            <person name="Fulton L."/>
            <person name="Goela D."/>
            <person name="Graves T."/>
            <person name="Hawkins J."/>
            <person name="Hinds K."/>
            <person name="Kemp K."/>
            <person name="Latreille P."/>
            <person name="Layman D."/>
            <person name="Ozersky P."/>
            <person name="Rohlfing T."/>
            <person name="Scheet P."/>
            <person name="Walker C."/>
            <person name="Wamsley A."/>
            <person name="Wohldmann P."/>
            <person name="Pepin K."/>
            <person name="Nelson J."/>
            <person name="Korf I."/>
            <person name="Bedell J.A."/>
            <person name="Hillier L.W."/>
            <person name="Mardis E."/>
            <person name="Waterston R."/>
            <person name="Wilson R."/>
            <person name="Emanuel B.S."/>
            <person name="Shaikh T."/>
            <person name="Kurahashi H."/>
            <person name="Saitta S."/>
            <person name="Budarf M.L."/>
            <person name="McDermid H.E."/>
            <person name="Johnson A."/>
            <person name="Wong A.C.C."/>
            <person name="Morrow B.E."/>
            <person name="Edelmann L."/>
            <person name="Kim U.J."/>
            <person name="Shizuya H."/>
            <person name="Simon M.I."/>
            <person name="Dumanski J.P."/>
            <person name="Peyrard M."/>
            <person name="Kedra D."/>
            <person name="Seroussi E."/>
            <person name="Fransson I."/>
            <person name="Tapia I."/>
            <person name="Bruder C.E."/>
            <person name="O'Brien K.P."/>
            <person name="Wilkinson P."/>
            <person name="Bodenteich A."/>
            <person name="Hartman K."/>
            <person name="Hu X."/>
            <person name="Khan A.S."/>
            <person name="Lane L."/>
            <person name="Tilahun Y."/>
            <person name="Wright H."/>
        </authorList>
    </citation>
    <scope>NUCLEOTIDE SEQUENCE [LARGE SCALE GENOMIC DNA]</scope>
</reference>
<reference key="3">
    <citation type="submission" date="2005-07" db="EMBL/GenBank/DDBJ databases">
        <authorList>
            <person name="Mural R.J."/>
            <person name="Istrail S."/>
            <person name="Sutton G."/>
            <person name="Florea L."/>
            <person name="Halpern A.L."/>
            <person name="Mobarry C.M."/>
            <person name="Lippert R."/>
            <person name="Walenz B."/>
            <person name="Shatkay H."/>
            <person name="Dew I."/>
            <person name="Miller J.R."/>
            <person name="Flanigan M.J."/>
            <person name="Edwards N.J."/>
            <person name="Bolanos R."/>
            <person name="Fasulo D."/>
            <person name="Halldorsson B.V."/>
            <person name="Hannenhalli S."/>
            <person name="Turner R."/>
            <person name="Yooseph S."/>
            <person name="Lu F."/>
            <person name="Nusskern D.R."/>
            <person name="Shue B.C."/>
            <person name="Zheng X.H."/>
            <person name="Zhong F."/>
            <person name="Delcher A.L."/>
            <person name="Huson D.H."/>
            <person name="Kravitz S.A."/>
            <person name="Mouchard L."/>
            <person name="Reinert K."/>
            <person name="Remington K.A."/>
            <person name="Clark A.G."/>
            <person name="Waterman M.S."/>
            <person name="Eichler E.E."/>
            <person name="Adams M.D."/>
            <person name="Hunkapiller M.W."/>
            <person name="Myers E.W."/>
            <person name="Venter J.C."/>
        </authorList>
    </citation>
    <scope>NUCLEOTIDE SEQUENCE [LARGE SCALE GENOMIC DNA]</scope>
</reference>
<reference key="4">
    <citation type="journal article" date="2004" name="Genome Res.">
        <title>The status, quality, and expansion of the NIH full-length cDNA project: the Mammalian Gene Collection (MGC).</title>
        <authorList>
            <consortium name="The MGC Project Team"/>
        </authorList>
    </citation>
    <scope>NUCLEOTIDE SEQUENCE [LARGE SCALE MRNA] (ISOFORM 2)</scope>
    <source>
        <tissue>Brain</tissue>
    </source>
</reference>
<reference key="5">
    <citation type="journal article" date="2014" name="J. Cell Sci.">
        <title>Proteomic analysis of mammalian sperm cells identifies new components of the centrosome.</title>
        <authorList>
            <person name="Firat-Karalar E.N."/>
            <person name="Sante J."/>
            <person name="Elliott S."/>
            <person name="Stearns T."/>
        </authorList>
    </citation>
    <scope>SUBCELLULAR LOCATION</scope>
</reference>
<protein>
    <recommendedName>
        <fullName>Coiled-coil domain-containing protein 116</fullName>
    </recommendedName>
</protein>
<sequence>MARCRHHSGYLADDEASHSMCSARVQLPKKPLVPEMRPACKPGRVPHPPSTCGSSALQGQRRNKRHPQPFGHFLDFLTESQVLDSLETVVEKATERMAAMKTEAGVPLVEVQDPVEVPSGGRRAHARPSLSTVHRHRVRPTLCTGHPNNYPSSSSSMSNCHSSLMAGCLGSHSRDSDLGAQGSLPPVRDKLLLEKNLKRLLQLEREGKGLSQSCSQRDSLLWDSLGSQTSFQWTQEQPLSWFSGLLGSSSGVPEASEPRPGEQEPIFRKREFNKEIKSLLSQLESLDLPGYCPLREPHRTLNFLADHRLFPALQSVVSQAVDKLRGAHCRDGRPLFPTSLEPTSDLPPLGSEPAKPTNGGQPYASPRPTVSSPKMLQRKRKDRGGSPSMSSAQVATRFKLKSPCSSSRFTKKKPLPSISSKSSMSHFSNRLYEELADFLTQQAASLVIRKYEFEKDLSKQLGFFSFPITHVLRDLSLGLKKVKGSRIHLSSETHRSCLLRKLEESKRARQASRLSTSHCSTETPSVQQEPATHTAQDQATEPCRSLYTNLPASRQLSPLEPKLYMSACTGMGSSPPKSKDMDNEGRDKAEIEDEDEDEFKDEDQDEDKDEDGV</sequence>
<name>CC116_HUMAN</name>
<feature type="chain" id="PRO_0000254052" description="Coiled-coil domain-containing protein 116">
    <location>
        <begin position="1"/>
        <end position="613"/>
    </location>
</feature>
<feature type="region of interest" description="Disordered" evidence="3">
    <location>
        <begin position="41"/>
        <end position="68"/>
    </location>
</feature>
<feature type="region of interest" description="Disordered" evidence="3">
    <location>
        <begin position="329"/>
        <end position="395"/>
    </location>
</feature>
<feature type="region of interest" description="Disordered" evidence="3">
    <location>
        <begin position="509"/>
        <end position="541"/>
    </location>
</feature>
<feature type="region of interest" description="Disordered" evidence="3">
    <location>
        <begin position="565"/>
        <end position="613"/>
    </location>
</feature>
<feature type="coiled-coil region" evidence="2">
    <location>
        <begin position="79"/>
        <end position="104"/>
    </location>
</feature>
<feature type="compositionally biased region" description="Polar residues" evidence="3">
    <location>
        <begin position="51"/>
        <end position="60"/>
    </location>
</feature>
<feature type="compositionally biased region" description="Polar residues" evidence="3">
    <location>
        <begin position="512"/>
        <end position="539"/>
    </location>
</feature>
<feature type="compositionally biased region" description="Basic and acidic residues" evidence="3">
    <location>
        <begin position="577"/>
        <end position="589"/>
    </location>
</feature>
<feature type="compositionally biased region" description="Acidic residues" evidence="3">
    <location>
        <begin position="590"/>
        <end position="613"/>
    </location>
</feature>
<feature type="modified residue" description="Phosphoserine" evidence="1">
    <location>
        <position position="386"/>
    </location>
</feature>
<feature type="splice variant" id="VSP_059645" description="In isoform 3.">
    <original>SPCSSSRFTKKKPLPSISSKSSMSHFSNRLYEELADFLTQQAASLVIRKYEFEKDLSKQLGFFSFPITHVLRDLSLGLKKVKGSRIHLSSETHRSCLLRKLEESKRARQASRLSTSHCSTETPSVQQEPATHTAQDQATEPCRSLYTNLPASRQLSPLEPKLYMSACTGMGSSPPKSKDMDNEGRDKAEIEDEDEDEFKDEDQDEDKDEDGV</original>
    <variation>VTPTEKPNVPSPSLHSREEAPDSDPKLQNPPVSLSSSQRAQPWQGLHLTLPTPGIVVEVACSQGHLRGPVTPPLSSPYPRSSCYLLPELSPVASSSPASLCPEVTSSKVGPGMSLQEKGSLTHHS</variation>
    <location>
        <begin position="402"/>
        <end position="613"/>
    </location>
</feature>
<feature type="splice variant" id="VSP_059646" description="In isoform 1.">
    <original>RQASRLSTSHCSTETPSVQQEPATHTAQDQATEPCRSLYTNLPASRQLSPLEPKLYMSACTGMGSSPPKSKDMDNEGRDKAEIEDEDEDEFKDEDQDEDKDEDGV</original>
    <variation>AAVSLEA</variation>
    <location>
        <begin position="509"/>
        <end position="613"/>
    </location>
</feature>
<feature type="sequence variant" id="VAR_028803" description="In dbSNP:rs861854.">
    <original>R</original>
    <variation>C</variation>
    <location>
        <position position="96"/>
    </location>
</feature>
<feature type="sequence variant" id="VAR_028804" description="In dbSNP:rs371513.">
    <original>G</original>
    <variation>R</variation>
    <location>
        <position position="121"/>
    </location>
</feature>
<feature type="sequence variant" id="VAR_028805" description="In dbSNP:rs861853.">
    <original>R</original>
    <variation>W</variation>
    <location>
        <position position="122"/>
    </location>
</feature>
<feature type="sequence variant" id="VAR_028806" description="In dbSNP:rs12170285.">
    <original>R</original>
    <variation>W</variation>
    <location>
        <position position="199"/>
    </location>
</feature>
<feature type="sequence variant" id="VAR_061578" description="In dbSNP:rs41279987.">
    <original>P</original>
    <variation>L</variation>
    <location>
        <position position="293"/>
    </location>
</feature>
<feature type="sequence variant" id="VAR_028807" description="In dbSNP:rs11705259.">
    <original>A</original>
    <variation>T</variation>
    <location>
        <position position="436"/>
    </location>
</feature>